<accession>P85337</accession>
<dbReference type="EC" id="3.2.1.14"/>
<dbReference type="GO" id="GO:0005576">
    <property type="term" value="C:extracellular region"/>
    <property type="evidence" value="ECO:0007669"/>
    <property type="project" value="UniProtKB-KW"/>
</dbReference>
<dbReference type="GO" id="GO:0008843">
    <property type="term" value="F:endochitinase activity"/>
    <property type="evidence" value="ECO:0007669"/>
    <property type="project" value="UniProtKB-EC"/>
</dbReference>
<dbReference type="GO" id="GO:0006032">
    <property type="term" value="P:chitin catabolic process"/>
    <property type="evidence" value="ECO:0007669"/>
    <property type="project" value="UniProtKB-KW"/>
</dbReference>
<dbReference type="GO" id="GO:0006952">
    <property type="term" value="P:defense response"/>
    <property type="evidence" value="ECO:0007669"/>
    <property type="project" value="UniProtKB-KW"/>
</dbReference>
<dbReference type="GO" id="GO:0000272">
    <property type="term" value="P:polysaccharide catabolic process"/>
    <property type="evidence" value="ECO:0007669"/>
    <property type="project" value="UniProtKB-KW"/>
</dbReference>
<name>CHI1_TAXBA</name>
<protein>
    <recommendedName>
        <fullName>Endochitinase 1</fullName>
        <ecNumber>3.2.1.14</ecNumber>
    </recommendedName>
</protein>
<keyword id="KW-0119">Carbohydrate metabolism</keyword>
<keyword id="KW-0134">Cell wall</keyword>
<keyword id="KW-0146">Chitin degradation</keyword>
<keyword id="KW-0903">Direct protein sequencing</keyword>
<keyword id="KW-0326">Glycosidase</keyword>
<keyword id="KW-0378">Hydrolase</keyword>
<keyword id="KW-0611">Plant defense</keyword>
<keyword id="KW-0624">Polysaccharide degradation</keyword>
<keyword id="KW-0964">Secreted</keyword>
<sequence>AIGFDGLNDPDIVAR</sequence>
<proteinExistence type="evidence at protein level"/>
<reference evidence="4" key="1">
    <citation type="journal article" date="2009" name="J. Plant Physiol.">
        <title>Analysis of the soluble cell wall proteome of gymnosperms.</title>
        <authorList>
            <person name="Uzal E.N."/>
            <person name="Gomez-Ros L.V."/>
            <person name="Hernandez J.A."/>
            <person name="Pedreno M.A."/>
            <person name="Cuello J."/>
            <person name="Ros Barcelo A."/>
        </authorList>
    </citation>
    <scope>PROTEIN SEQUENCE</scope>
    <scope>SUBCELLULAR LOCATION</scope>
    <source>
        <strain evidence="2">PC-1008</strain>
        <tissue evidence="2">Callus</tissue>
    </source>
</reference>
<organism>
    <name type="scientific">Taxus baccata</name>
    <name type="common">English yew</name>
    <dbReference type="NCBI Taxonomy" id="25629"/>
    <lineage>
        <taxon>Eukaryota</taxon>
        <taxon>Viridiplantae</taxon>
        <taxon>Streptophyta</taxon>
        <taxon>Embryophyta</taxon>
        <taxon>Tracheophyta</taxon>
        <taxon>Spermatophyta</taxon>
        <taxon>Pinopsida</taxon>
        <taxon>Pinidae</taxon>
        <taxon>Conifers II</taxon>
        <taxon>Cupressales</taxon>
        <taxon>Taxaceae</taxon>
        <taxon>Taxus</taxon>
    </lineage>
</organism>
<comment type="function">
    <text evidence="4">Defense against chitin-containing fungal pathogens.</text>
</comment>
<comment type="catalytic activity">
    <reaction>
        <text>Random endo-hydrolysis of N-acetyl-beta-D-glucosaminide (1-&gt;4)-beta-linkages in chitin and chitodextrins.</text>
        <dbReference type="EC" id="3.2.1.14"/>
    </reaction>
</comment>
<comment type="subcellular location">
    <subcellularLocation>
        <location evidence="2">Secreted</location>
        <location evidence="2">Cell wall</location>
    </subcellularLocation>
</comment>
<comment type="similarity">
    <text evidence="1">Belongs to the glycosyl hydrolase 19 family. Chitinase class I subfamily.</text>
</comment>
<evidence type="ECO:0000255" key="1"/>
<evidence type="ECO:0000269" key="2">
    <source>
    </source>
</evidence>
<evidence type="ECO:0000303" key="3">
    <source>
    </source>
</evidence>
<evidence type="ECO:0000305" key="4"/>
<feature type="chain" id="PRO_0000314645" description="Endochitinase 1">
    <location>
        <begin position="1" status="less than"/>
        <end position="15" status="greater than"/>
    </location>
</feature>
<feature type="non-terminal residue" evidence="3">
    <location>
        <position position="1"/>
    </location>
</feature>
<feature type="non-terminal residue" evidence="3">
    <location>
        <position position="15"/>
    </location>
</feature>